<gene>
    <name type="primary">Tlr4</name>
</gene>
<proteinExistence type="evidence at transcript level"/>
<reference key="1">
    <citation type="journal article" date="1999" name="J. Clin. Invest.">
        <title>Toll4 (TLR4) expression in cardiac myocytes in normal and failing myocardium.</title>
        <authorList>
            <person name="Frantz S."/>
            <person name="Kobzik L."/>
            <person name="Kim Y.-D."/>
            <person name="Fukazawa R."/>
            <person name="Medzhitov R."/>
            <person name="Lee R.T."/>
            <person name="Kelly R.A."/>
        </authorList>
    </citation>
    <scope>NUCLEOTIDE SEQUENCE [MRNA]</scope>
    <source>
        <strain>Sprague-Dawley</strain>
        <tissue>Heart</tissue>
    </source>
</reference>
<reference key="2">
    <citation type="journal article" date="2019" name="J. Cell. Physiol.">
        <title>CHIP attenuates lipopolysaccharide-induced cardiac hypertrophy and apoptosis by promoting NFATc3 proteasomal degradation.</title>
        <authorList>
            <person name="Chao C.N."/>
            <person name="Lai C.H."/>
            <person name="Badrealam K.F."/>
            <person name="Lo J.F."/>
            <person name="Shen C.Y."/>
            <person name="Chen C.H."/>
            <person name="Chen R.J."/>
            <person name="Viswanadha V.P."/>
            <person name="Kuo W.W."/>
            <person name="Huang C.Y."/>
        </authorList>
    </citation>
    <scope>INDUCTION BY LIPOPOLYSACCHARIDES</scope>
</reference>
<keyword id="KW-1003">Cell membrane</keyword>
<keyword id="KW-0966">Cell projection</keyword>
<keyword id="KW-1015">Disulfide bond</keyword>
<keyword id="KW-0967">Endosome</keyword>
<keyword id="KW-0325">Glycoprotein</keyword>
<keyword id="KW-0391">Immunity</keyword>
<keyword id="KW-0395">Inflammatory response</keyword>
<keyword id="KW-0399">Innate immunity</keyword>
<keyword id="KW-0433">Leucine-rich repeat</keyword>
<keyword id="KW-0472">Membrane</keyword>
<keyword id="KW-0520">NAD</keyword>
<keyword id="KW-0675">Receptor</keyword>
<keyword id="KW-1185">Reference proteome</keyword>
<keyword id="KW-0677">Repeat</keyword>
<keyword id="KW-0732">Signal</keyword>
<keyword id="KW-0812">Transmembrane</keyword>
<keyword id="KW-1133">Transmembrane helix</keyword>
<keyword id="KW-0832">Ubl conjugation</keyword>
<protein>
    <recommendedName>
        <fullName>Toll-like receptor 4</fullName>
        <shortName>Toll4</shortName>
    </recommendedName>
    <cdAntigenName>CD284</cdAntigenName>
</protein>
<accession>Q9QX05</accession>
<comment type="function">
    <text evidence="1">Transmembrane receptor that functions as a pattern recognition receptor recognizing pathogen- and damage-associated molecular patterns (PAMPs and DAMPs) to induce innate immune responses via downstream signaling pathways. At the plasma membrane, cooperates with LY96 to mediate the innate immune response to bacterial lipopolysaccharide (LPS). Also involved in LPS-independent inflammatory responses triggered by free fatty acids, such as palmitate, and Ni(2+). Mechanistically, acts via MYD88, TIRAP and TRAF6, leading to NF-kappa-B activation, cytokine secretion and the inflammatory response. Alternatively, CD14-mediated TLR4 internalization via endocytosis is associated with the initiation of a MYD88-independent signaling via the TICAM1-TBK1-IRF3 axis leading to type I interferon production. In addition to the secretion of proinflammatory cytokines, initiates the activation of NLRP3 inflammasome and formation of a positive feedback loop between autophagy and NF-kappa-B signaling cascade. In complex with TLR6, promotes inflammation in monocytes/macrophages by associating with TLR6 and the receptor CD86. Upon ligand binding, such as oxLDL or amyloid-beta 42, the TLR4:TLR6 complex is internalized and triggers inflammatory response, leading to NF-kappa-B-dependent production of CXCL1, CXCL2 and CCL9 cytokines, via MYD88 signaling pathway, and CCL5 cytokine, via TICAM1 signaling pathway. In myeloid dendritic cells, vesicular stomatitis virus glycoprotein G but not LPS promotes the activation of IRF7, leading to type I IFN production in a CD14-dependent manner.</text>
</comment>
<comment type="subunit">
    <text evidence="1 2">Belongs to the lipopolysaccharide (LPS) receptor, a multi-protein complex containing at least CD14, LY96 and TLR4. Binding to bacterial LPS leads to homodimerization. Interacts with LY96 via the extracellular domain. Interacts with MYD88 and TIRAP via their respective TIR domains. Interacts with TICAM2. Interacts with NOX4. Interacts with CNPY3 and HSP90B1; this interaction is required for proper folding in the endoplasmic reticulum. Interacts with MAP3K21; this interaction leads to negative regulation of TLR4 signaling. Interacts with CD36, following CD36 stimulation by oxLDL or amyloid-beta 42, and forms a heterodimer with TLR6. The trimeric complex is internalized and triggers inflammatory response. LYN kinase activity facilitates TLR4-TLR6 heterodimerization and signal initiation. Interacts with TICAM1 in response to LPS in a WDFY1-dependent manner. Interacts with WDFY1 in response to LPS. Interacts with SMPDL3B. Interacts with CEACAM1; upon lipopolysaccharide stimulation, forms a complex including TLR4 and the phosphorylated form of SYK and CEACAM1, which in turn, recruits PTPN6 that dephosphorylates SYK, reducing the production of reactive oxygen species (ROS) and lysosome disruption, which in turn, reduces the activity of the inflammasome. Interacts with RFTN1; the interaction occurs in response to lipopolysaccharide stimulation. Interacts with SCIMP; the interaction occurs in response to lipopolysaccharide stimulation and is enhanced by phosphorylation of SCIMP by LYN (By similarity). This interaction facilitates the phosphorylation of TLR4 by LYN which elicits a selective cytokine response in macrophages (By similarity). Interacts with TRAF3IP3 (By similarity). Interacts with TREM1; this interaction enhances TLR4-mediated inflammatory response (By similarity). Interacts with ZG16B/PAUF (By similarity). Interacts with CD82; this interaction inhibits TLR4-mediated signaling pathway (By similarity).</text>
</comment>
<comment type="subcellular location">
    <subcellularLocation>
        <location evidence="1">Cell membrane</location>
        <topology evidence="1">Single-pass type I membrane protein</topology>
    </subcellularLocation>
    <subcellularLocation>
        <location evidence="1">Early endosome</location>
    </subcellularLocation>
    <subcellularLocation>
        <location evidence="2">Cell projection</location>
        <location evidence="2">Ruffle</location>
    </subcellularLocation>
    <text evidence="1">Upon complex formation with CD36 and TLR6, internalized through dynamin-dependent endocytosis. Colocalizes with RFTN1 at cell membrane and then together with RFTN1 moves to endosomes, upon lipopolysaccharide stimulation.</text>
</comment>
<comment type="induction">
    <text evidence="5">Induced by lipopolysaccharides.</text>
</comment>
<comment type="domain">
    <text evidence="1">The TIR domain mediates interaction with NOX4.</text>
</comment>
<comment type="PTM">
    <text evidence="2">Phosphorylated on tyrosine residues by LYN after binding lipopolysaccharide.</text>
</comment>
<comment type="PTM">
    <text evidence="1">Ubiquitinated by RNF128 via 'Lys-28'-linked polyubiquitin chains, leading to proteasomal degradation.</text>
</comment>
<comment type="similarity">
    <text evidence="6">Belongs to the Toll-like receptor family.</text>
</comment>
<comment type="caution">
    <text evidence="1 6">In some plant proteins and in human SARM1, the TIR domain has NAD(+) hydrolase (NADase) activity (By similarity). However, despite the presence of the catalytic Asp residue, the isolated TIR domain of human TLR4 lacks NADase activity (By similarity). Based on this, it is unlikely that Toll-like receptors have NADase activity.</text>
</comment>
<evidence type="ECO:0000250" key="1">
    <source>
        <dbReference type="UniProtKB" id="O00206"/>
    </source>
</evidence>
<evidence type="ECO:0000250" key="2">
    <source>
        <dbReference type="UniProtKB" id="Q9QUK6"/>
    </source>
</evidence>
<evidence type="ECO:0000255" key="3"/>
<evidence type="ECO:0000255" key="4">
    <source>
        <dbReference type="PROSITE-ProRule" id="PRU00204"/>
    </source>
</evidence>
<evidence type="ECO:0000269" key="5">
    <source>
    </source>
</evidence>
<evidence type="ECO:0000305" key="6"/>
<organism>
    <name type="scientific">Rattus norvegicus</name>
    <name type="common">Rat</name>
    <dbReference type="NCBI Taxonomy" id="10116"/>
    <lineage>
        <taxon>Eukaryota</taxon>
        <taxon>Metazoa</taxon>
        <taxon>Chordata</taxon>
        <taxon>Craniata</taxon>
        <taxon>Vertebrata</taxon>
        <taxon>Euteleostomi</taxon>
        <taxon>Mammalia</taxon>
        <taxon>Eutheria</taxon>
        <taxon>Euarchontoglires</taxon>
        <taxon>Glires</taxon>
        <taxon>Rodentia</taxon>
        <taxon>Myomorpha</taxon>
        <taxon>Muroidea</taxon>
        <taxon>Muridae</taxon>
        <taxon>Murinae</taxon>
        <taxon>Rattus</taxon>
    </lineage>
</organism>
<sequence length="835" mass="96072">MMPLLHLAGTLIMALFLSCLRPGSLNPCIEVLPNITYQCMDQNLSKIPHDIPYSTKNLDLSFNPLKILRSYSFTNFSQLQWLDLSRCEIETIEDKAWHGLNQLSTLVLTGNPIKSFSPGSFSGLTNLENLVAVETKMTSLEGFHIGQLISLKKLNVAHNLIHSFKLPEYFSNLTNLEHVDLSYNYIQTISVKDLQFLRENPQVNLSLDLSLNPIDSIQAQAFQGIRLHELTLRSNFNSSNVLKMCLQNMTGLHVHRLILGEFKNERNLESFDRSVMEGLCNVSIDEFRLTYINHFSDDIYNLNCLANISAMSFTGVHIKHIADVPRHFKWQSLSIIRCHLKPFPKLSLPFLKSWTLTTNREDISFGQLALPSLRYLDLSRNAMSFRGCCSYSDFGTNNLKYLDLSFNGVILMSANFMGLEELEYLDFQHSTLKKVTEFSVFLSLEKLLYLDISYTNTKIDFDGIFLGLISLNTLKMAGNSFKDNTLSNVFTNTTNLTFLDLSKCQLEQISRGVFDTLYRLQLLNMSHNNLLFLDPSHYKQLYSLRTLDCSFNRIETSKGILQHFPKSLAVFNLTNNSVACICEYQNFLQWVKDQKMFLVNVEQMKCASPIDMKASLVLDFTNSTCYIYKTIISVSVVSVLVVATVAFLIYHFYFHLILIAGCKKYSRGESIYDAFVIYSSQNEDWVRNELVKNLEEGVPRFQLCLHYRDFIPGVAIAANIIQEGFHKSRKVIVVVSRHFIQSRWCIFEYEIAQTWQFLSSRSGIIFIVLEKVEKSLLRQQVELYRLLSRNTYLEWEDNALGRHIFWRRLKKALLDGKALNPDETSEEEQEATTLT</sequence>
<dbReference type="EMBL" id="AF057025">
    <property type="protein sequence ID" value="AAC13313.1"/>
    <property type="molecule type" value="mRNA"/>
</dbReference>
<dbReference type="RefSeq" id="NP_062051.1">
    <property type="nucleotide sequence ID" value="NM_019178.1"/>
</dbReference>
<dbReference type="SMR" id="Q9QX05"/>
<dbReference type="BioGRID" id="247933">
    <property type="interactions" value="1"/>
</dbReference>
<dbReference type="FunCoup" id="Q9QX05">
    <property type="interactions" value="527"/>
</dbReference>
<dbReference type="IntAct" id="Q9QX05">
    <property type="interactions" value="1"/>
</dbReference>
<dbReference type="MINT" id="Q9QX05"/>
<dbReference type="STRING" id="10116.ENSRNOP00000014020"/>
<dbReference type="ChEMBL" id="CHEMBL4523480"/>
<dbReference type="GlyCosmos" id="Q9QX05">
    <property type="glycosylation" value="15 sites, No reported glycans"/>
</dbReference>
<dbReference type="GlyGen" id="Q9QX05">
    <property type="glycosylation" value="15 sites"/>
</dbReference>
<dbReference type="PhosphoSitePlus" id="Q9QX05"/>
<dbReference type="PaxDb" id="10116-ENSRNOP00000014020"/>
<dbReference type="ABCD" id="Q9QX05">
    <property type="antibodies" value="2 sequenced antibodies"/>
</dbReference>
<dbReference type="GeneID" id="29260"/>
<dbReference type="KEGG" id="rno:29260"/>
<dbReference type="UCSC" id="RGD:3870">
    <property type="organism name" value="rat"/>
</dbReference>
<dbReference type="AGR" id="RGD:3870"/>
<dbReference type="CTD" id="7099"/>
<dbReference type="RGD" id="3870">
    <property type="gene designation" value="Tlr4"/>
</dbReference>
<dbReference type="eggNOG" id="KOG4641">
    <property type="taxonomic scope" value="Eukaryota"/>
</dbReference>
<dbReference type="InParanoid" id="Q9QX05"/>
<dbReference type="PhylomeDB" id="Q9QX05"/>
<dbReference type="Reactome" id="R-RNO-140534">
    <property type="pathway name" value="Caspase activation via Death Receptors in the presence of ligand"/>
</dbReference>
<dbReference type="Reactome" id="R-RNO-166016">
    <property type="pathway name" value="Toll Like Receptor 4 (TLR4) Cascade"/>
</dbReference>
<dbReference type="Reactome" id="R-RNO-166166">
    <property type="pathway name" value="MyD88-independent TLR4 cascade"/>
</dbReference>
<dbReference type="Reactome" id="R-RNO-2562578">
    <property type="pathway name" value="TRIF-mediated programmed cell death"/>
</dbReference>
<dbReference type="Reactome" id="R-RNO-5686938">
    <property type="pathway name" value="Regulation of TLR by endogenous ligand"/>
</dbReference>
<dbReference type="Reactome" id="R-RNO-936964">
    <property type="pathway name" value="Activation of IRF3, IRF7 mediated by TBK1, IKKEpsilon (IKBKE)"/>
</dbReference>
<dbReference type="Reactome" id="R-RNO-937041">
    <property type="pathway name" value="IKK complex recruitment mediated by RIP1"/>
</dbReference>
<dbReference type="Reactome" id="R-RNO-937072">
    <property type="pathway name" value="TRAF6-mediated induction of TAK1 complex within TLR4 complex"/>
</dbReference>
<dbReference type="Reactome" id="R-RNO-9707616">
    <property type="pathway name" value="Heme signaling"/>
</dbReference>
<dbReference type="Reactome" id="R-RNO-975163">
    <property type="pathway name" value="IRAK2 mediated activation of TAK1 complex upon TLR7/8 or 9 stimulation"/>
</dbReference>
<dbReference type="Reactome" id="R-RNO-9824878">
    <property type="pathway name" value="Regulation of TBK1, IKKEpsilon (IKBKE)-mediated activation of IRF3, IRF7"/>
</dbReference>
<dbReference type="PRO" id="PR:Q9QX05"/>
<dbReference type="Proteomes" id="UP000002494">
    <property type="component" value="Unplaced"/>
</dbReference>
<dbReference type="GO" id="GO:0009986">
    <property type="term" value="C:cell surface"/>
    <property type="evidence" value="ECO:0000314"/>
    <property type="project" value="RGD"/>
</dbReference>
<dbReference type="GO" id="GO:0005737">
    <property type="term" value="C:cytoplasm"/>
    <property type="evidence" value="ECO:0000266"/>
    <property type="project" value="RGD"/>
</dbReference>
<dbReference type="GO" id="GO:0005769">
    <property type="term" value="C:early endosome"/>
    <property type="evidence" value="ECO:0007669"/>
    <property type="project" value="UniProtKB-SubCell"/>
</dbReference>
<dbReference type="GO" id="GO:0010008">
    <property type="term" value="C:endosome membrane"/>
    <property type="evidence" value="ECO:0000266"/>
    <property type="project" value="RGD"/>
</dbReference>
<dbReference type="GO" id="GO:0009897">
    <property type="term" value="C:external side of plasma membrane"/>
    <property type="evidence" value="ECO:0000266"/>
    <property type="project" value="RGD"/>
</dbReference>
<dbReference type="GO" id="GO:0046696">
    <property type="term" value="C:lipopolysaccharide receptor complex"/>
    <property type="evidence" value="ECO:0000250"/>
    <property type="project" value="UniProtKB"/>
</dbReference>
<dbReference type="GO" id="GO:0048471">
    <property type="term" value="C:perinuclear region of cytoplasm"/>
    <property type="evidence" value="ECO:0000266"/>
    <property type="project" value="RGD"/>
</dbReference>
<dbReference type="GO" id="GO:0001891">
    <property type="term" value="C:phagocytic cup"/>
    <property type="evidence" value="ECO:0000266"/>
    <property type="project" value="RGD"/>
</dbReference>
<dbReference type="GO" id="GO:0005886">
    <property type="term" value="C:plasma membrane"/>
    <property type="evidence" value="ECO:0000250"/>
    <property type="project" value="UniProtKB"/>
</dbReference>
<dbReference type="GO" id="GO:0043235">
    <property type="term" value="C:receptor complex"/>
    <property type="evidence" value="ECO:0000266"/>
    <property type="project" value="RGD"/>
</dbReference>
<dbReference type="GO" id="GO:0001726">
    <property type="term" value="C:ruffle"/>
    <property type="evidence" value="ECO:0007669"/>
    <property type="project" value="UniProtKB-SubCell"/>
</dbReference>
<dbReference type="GO" id="GO:0042802">
    <property type="term" value="F:identical protein binding"/>
    <property type="evidence" value="ECO:0000266"/>
    <property type="project" value="RGD"/>
</dbReference>
<dbReference type="GO" id="GO:0001530">
    <property type="term" value="F:lipopolysaccharide binding"/>
    <property type="evidence" value="ECO:0000314"/>
    <property type="project" value="RGD"/>
</dbReference>
<dbReference type="GO" id="GO:0001875">
    <property type="term" value="F:lipopolysaccharide immune receptor activity"/>
    <property type="evidence" value="ECO:0000250"/>
    <property type="project" value="UniProtKB"/>
</dbReference>
<dbReference type="GO" id="GO:0061809">
    <property type="term" value="F:NAD+ nucleosidase activity, cyclic ADP-ribose generating"/>
    <property type="evidence" value="ECO:0007669"/>
    <property type="project" value="UniProtKB-EC"/>
</dbReference>
<dbReference type="GO" id="GO:0043548">
    <property type="term" value="F:phosphatidylinositol 3-kinase binding"/>
    <property type="evidence" value="ECO:0000353"/>
    <property type="project" value="RGD"/>
</dbReference>
<dbReference type="GO" id="GO:0046982">
    <property type="term" value="F:protein heterodimerization activity"/>
    <property type="evidence" value="ECO:0000266"/>
    <property type="project" value="RGD"/>
</dbReference>
<dbReference type="GO" id="GO:0038023">
    <property type="term" value="F:signaling receptor activity"/>
    <property type="evidence" value="ECO:0000266"/>
    <property type="project" value="RGD"/>
</dbReference>
<dbReference type="GO" id="GO:0005102">
    <property type="term" value="F:signaling receptor binding"/>
    <property type="evidence" value="ECO:0000266"/>
    <property type="project" value="RGD"/>
</dbReference>
<dbReference type="GO" id="GO:0004888">
    <property type="term" value="F:transmembrane signaling receptor activity"/>
    <property type="evidence" value="ECO:0000266"/>
    <property type="project" value="RGD"/>
</dbReference>
<dbReference type="GO" id="GO:0002218">
    <property type="term" value="P:activation of innate immune response"/>
    <property type="evidence" value="ECO:0000266"/>
    <property type="project" value="RGD"/>
</dbReference>
<dbReference type="GO" id="GO:0014002">
    <property type="term" value="P:astrocyte development"/>
    <property type="evidence" value="ECO:0000266"/>
    <property type="project" value="RGD"/>
</dbReference>
<dbReference type="GO" id="GO:0042100">
    <property type="term" value="P:B cell proliferation"/>
    <property type="evidence" value="ECO:0000266"/>
    <property type="project" value="RGD"/>
</dbReference>
<dbReference type="GO" id="GO:0002322">
    <property type="term" value="P:B cell proliferation involved in immune response"/>
    <property type="evidence" value="ECO:0000266"/>
    <property type="project" value="RGD"/>
</dbReference>
<dbReference type="GO" id="GO:1904646">
    <property type="term" value="P:cellular response to amyloid-beta"/>
    <property type="evidence" value="ECO:0000266"/>
    <property type="project" value="RGD"/>
</dbReference>
<dbReference type="GO" id="GO:0071222">
    <property type="term" value="P:cellular response to lipopolysaccharide"/>
    <property type="evidence" value="ECO:0000270"/>
    <property type="project" value="RGD"/>
</dbReference>
<dbReference type="GO" id="GO:0071223">
    <property type="term" value="P:cellular response to lipoteichoic acid"/>
    <property type="evidence" value="ECO:0000266"/>
    <property type="project" value="RGD"/>
</dbReference>
<dbReference type="GO" id="GO:0071260">
    <property type="term" value="P:cellular response to mechanical stimulus"/>
    <property type="evidence" value="ECO:0000270"/>
    <property type="project" value="RGD"/>
</dbReference>
<dbReference type="GO" id="GO:0140052">
    <property type="term" value="P:cellular response to oxidised low-density lipoprotein particle stimulus"/>
    <property type="evidence" value="ECO:0000266"/>
    <property type="project" value="RGD"/>
</dbReference>
<dbReference type="GO" id="GO:0036120">
    <property type="term" value="P:cellular response to platelet-derived growth factor stimulus"/>
    <property type="evidence" value="ECO:0000266"/>
    <property type="project" value="RGD"/>
</dbReference>
<dbReference type="GO" id="GO:0071300">
    <property type="term" value="P:cellular response to retinoic acid"/>
    <property type="evidence" value="ECO:0000270"/>
    <property type="project" value="RGD"/>
</dbReference>
<dbReference type="GO" id="GO:0071346">
    <property type="term" value="P:cellular response to type II interferon"/>
    <property type="evidence" value="ECO:0000266"/>
    <property type="project" value="RGD"/>
</dbReference>
<dbReference type="GO" id="GO:0050829">
    <property type="term" value="P:defense response to Gram-negative bacterium"/>
    <property type="evidence" value="ECO:0000266"/>
    <property type="project" value="RGD"/>
</dbReference>
<dbReference type="GO" id="GO:0032497">
    <property type="term" value="P:detection of lipopolysaccharide"/>
    <property type="evidence" value="ECO:0000250"/>
    <property type="project" value="UniProtKB"/>
</dbReference>
<dbReference type="GO" id="GO:0050966">
    <property type="term" value="P:detection of mechanical stimulus involved in sensory perception of pain"/>
    <property type="evidence" value="ECO:0000315"/>
    <property type="project" value="RGD"/>
</dbReference>
<dbReference type="GO" id="GO:0050965">
    <property type="term" value="P:detection of temperature stimulus involved in sensory perception of pain"/>
    <property type="evidence" value="ECO:0000315"/>
    <property type="project" value="RGD"/>
</dbReference>
<dbReference type="GO" id="GO:0070371">
    <property type="term" value="P:ERK1 and ERK2 cascade"/>
    <property type="evidence" value="ECO:0000266"/>
    <property type="project" value="RGD"/>
</dbReference>
<dbReference type="GO" id="GO:0010467">
    <property type="term" value="P:gene expression"/>
    <property type="evidence" value="ECO:0000266"/>
    <property type="project" value="RGD"/>
</dbReference>
<dbReference type="GO" id="GO:0016064">
    <property type="term" value="P:immunoglobulin mediated immune response"/>
    <property type="evidence" value="ECO:0000270"/>
    <property type="project" value="RGD"/>
</dbReference>
<dbReference type="GO" id="GO:0006954">
    <property type="term" value="P:inflammatory response"/>
    <property type="evidence" value="ECO:0000266"/>
    <property type="project" value="RGD"/>
</dbReference>
<dbReference type="GO" id="GO:0002758">
    <property type="term" value="P:innate immune response-activating signaling pathway"/>
    <property type="evidence" value="ECO:0000315"/>
    <property type="project" value="RGD"/>
</dbReference>
<dbReference type="GO" id="GO:0060729">
    <property type="term" value="P:intestinal epithelial structure maintenance"/>
    <property type="evidence" value="ECO:0000266"/>
    <property type="project" value="RGD"/>
</dbReference>
<dbReference type="GO" id="GO:0007254">
    <property type="term" value="P:JNK cascade"/>
    <property type="evidence" value="ECO:0000266"/>
    <property type="project" value="RGD"/>
</dbReference>
<dbReference type="GO" id="GO:0006691">
    <property type="term" value="P:leukotriene metabolic process"/>
    <property type="evidence" value="ECO:0000314"/>
    <property type="project" value="RGD"/>
</dbReference>
<dbReference type="GO" id="GO:0031663">
    <property type="term" value="P:lipopolysaccharide-mediated signaling pathway"/>
    <property type="evidence" value="ECO:0000266"/>
    <property type="project" value="RGD"/>
</dbReference>
<dbReference type="GO" id="GO:0046651">
    <property type="term" value="P:lymphocyte proliferation"/>
    <property type="evidence" value="ECO:0000266"/>
    <property type="project" value="RGD"/>
</dbReference>
<dbReference type="GO" id="GO:0042116">
    <property type="term" value="P:macrophage activation"/>
    <property type="evidence" value="ECO:0000266"/>
    <property type="project" value="RGD"/>
</dbReference>
<dbReference type="GO" id="GO:0045342">
    <property type="term" value="P:MHC class II biosynthetic process"/>
    <property type="evidence" value="ECO:0000266"/>
    <property type="project" value="RGD"/>
</dbReference>
<dbReference type="GO" id="GO:0014004">
    <property type="term" value="P:microglia differentiation"/>
    <property type="evidence" value="ECO:0000266"/>
    <property type="project" value="RGD"/>
</dbReference>
<dbReference type="GO" id="GO:0001774">
    <property type="term" value="P:microglial cell activation"/>
    <property type="evidence" value="ECO:0000314"/>
    <property type="project" value="RGD"/>
</dbReference>
<dbReference type="GO" id="GO:0002755">
    <property type="term" value="P:MyD88-dependent toll-like receptor signaling pathway"/>
    <property type="evidence" value="ECO:0000266"/>
    <property type="project" value="RGD"/>
</dbReference>
<dbReference type="GO" id="GO:0120163">
    <property type="term" value="P:negative regulation of cold-induced thermogenesis"/>
    <property type="evidence" value="ECO:0000250"/>
    <property type="project" value="YuBioLab"/>
</dbReference>
<dbReference type="GO" id="GO:0070373">
    <property type="term" value="P:negative regulation of ERK1 and ERK2 cascade"/>
    <property type="evidence" value="ECO:0000266"/>
    <property type="project" value="RGD"/>
</dbReference>
<dbReference type="GO" id="GO:0032700">
    <property type="term" value="P:negative regulation of interleukin-17 production"/>
    <property type="evidence" value="ECO:0000266"/>
    <property type="project" value="RGD"/>
</dbReference>
<dbReference type="GO" id="GO:0032707">
    <property type="term" value="P:negative regulation of interleukin-23 production"/>
    <property type="evidence" value="ECO:0000266"/>
    <property type="project" value="RGD"/>
</dbReference>
<dbReference type="GO" id="GO:0032715">
    <property type="term" value="P:negative regulation of interleukin-6 production"/>
    <property type="evidence" value="ECO:0000266"/>
    <property type="project" value="RGD"/>
</dbReference>
<dbReference type="GO" id="GO:0032720">
    <property type="term" value="P:negative regulation of tumor necrosis factor production"/>
    <property type="evidence" value="ECO:0000266"/>
    <property type="project" value="RGD"/>
</dbReference>
<dbReference type="GO" id="GO:0032689">
    <property type="term" value="P:negative regulation of type II interferon production"/>
    <property type="evidence" value="ECO:0000266"/>
    <property type="project" value="RGD"/>
</dbReference>
<dbReference type="GO" id="GO:0022008">
    <property type="term" value="P:neurogenesis"/>
    <property type="evidence" value="ECO:0000266"/>
    <property type="project" value="RGD"/>
</dbReference>
<dbReference type="GO" id="GO:0006809">
    <property type="term" value="P:nitric oxide biosynthetic process"/>
    <property type="evidence" value="ECO:0000266"/>
    <property type="project" value="RGD"/>
</dbReference>
<dbReference type="GO" id="GO:0002537">
    <property type="term" value="P:nitric oxide production involved in inflammatory response"/>
    <property type="evidence" value="ECO:0000266"/>
    <property type="project" value="RGD"/>
</dbReference>
<dbReference type="GO" id="GO:0070427">
    <property type="term" value="P:nucleotide-binding oligomerization domain containing 1 signaling pathway"/>
    <property type="evidence" value="ECO:0000266"/>
    <property type="project" value="RGD"/>
</dbReference>
<dbReference type="GO" id="GO:0070431">
    <property type="term" value="P:nucleotide-binding oligomerization domain containing 2 signaling pathway"/>
    <property type="evidence" value="ECO:0000266"/>
    <property type="project" value="RGD"/>
</dbReference>
<dbReference type="GO" id="GO:0006909">
    <property type="term" value="P:phagocytosis"/>
    <property type="evidence" value="ECO:0000266"/>
    <property type="project" value="RGD"/>
</dbReference>
<dbReference type="GO" id="GO:0043065">
    <property type="term" value="P:positive regulation of apoptotic process"/>
    <property type="evidence" value="ECO:0000315"/>
    <property type="project" value="RGD"/>
</dbReference>
<dbReference type="GO" id="GO:0030890">
    <property type="term" value="P:positive regulation of B cell proliferation"/>
    <property type="evidence" value="ECO:0000266"/>
    <property type="project" value="RGD"/>
</dbReference>
<dbReference type="GO" id="GO:0043123">
    <property type="term" value="P:positive regulation of canonical NF-kappaB signal transduction"/>
    <property type="evidence" value="ECO:0000266"/>
    <property type="project" value="RGD"/>
</dbReference>
<dbReference type="GO" id="GO:0030335">
    <property type="term" value="P:positive regulation of cell migration"/>
    <property type="evidence" value="ECO:0000315"/>
    <property type="project" value="RGD"/>
</dbReference>
<dbReference type="GO" id="GO:1903974">
    <property type="term" value="P:positive regulation of cellular response to macrophage colony-stimulating factor stimulus"/>
    <property type="evidence" value="ECO:0000266"/>
    <property type="project" value="RGD"/>
</dbReference>
<dbReference type="GO" id="GO:2000343">
    <property type="term" value="P:positive regulation of chemokine (C-X-C motif) ligand 2 production"/>
    <property type="evidence" value="ECO:0000266"/>
    <property type="project" value="RGD"/>
</dbReference>
<dbReference type="GO" id="GO:0032722">
    <property type="term" value="P:positive regulation of chemokine production"/>
    <property type="evidence" value="ECO:0000266"/>
    <property type="project" value="RGD"/>
</dbReference>
<dbReference type="GO" id="GO:1900017">
    <property type="term" value="P:positive regulation of cytokine production involved in inflammatory response"/>
    <property type="evidence" value="ECO:0000266"/>
    <property type="project" value="RGD"/>
</dbReference>
<dbReference type="GO" id="GO:0070374">
    <property type="term" value="P:positive regulation of ERK1 and ERK2 cascade"/>
    <property type="evidence" value="ECO:0000266"/>
    <property type="project" value="RGD"/>
</dbReference>
<dbReference type="GO" id="GO:2001238">
    <property type="term" value="P:positive regulation of extrinsic apoptotic signaling pathway"/>
    <property type="evidence" value="ECO:0000266"/>
    <property type="project" value="RGD"/>
</dbReference>
<dbReference type="GO" id="GO:0010628">
    <property type="term" value="P:positive regulation of gene expression"/>
    <property type="evidence" value="ECO:0000266"/>
    <property type="project" value="RGD"/>
</dbReference>
<dbReference type="GO" id="GO:0050729">
    <property type="term" value="P:positive regulation of inflammatory response"/>
    <property type="evidence" value="ECO:0000266"/>
    <property type="project" value="RGD"/>
</dbReference>
<dbReference type="GO" id="GO:0032727">
    <property type="term" value="P:positive regulation of interferon-alpha production"/>
    <property type="evidence" value="ECO:0000266"/>
    <property type="project" value="RGD"/>
</dbReference>
<dbReference type="GO" id="GO:0032728">
    <property type="term" value="P:positive regulation of interferon-beta production"/>
    <property type="evidence" value="ECO:0000266"/>
    <property type="project" value="RGD"/>
</dbReference>
<dbReference type="GO" id="GO:0032731">
    <property type="term" value="P:positive regulation of interleukin-1 beta production"/>
    <property type="evidence" value="ECO:0000250"/>
    <property type="project" value="UniProtKB"/>
</dbReference>
<dbReference type="GO" id="GO:0032732">
    <property type="term" value="P:positive regulation of interleukin-1 production"/>
    <property type="evidence" value="ECO:0000266"/>
    <property type="project" value="RGD"/>
</dbReference>
<dbReference type="GO" id="GO:0032733">
    <property type="term" value="P:positive regulation of interleukin-10 production"/>
    <property type="evidence" value="ECO:0000266"/>
    <property type="project" value="RGD"/>
</dbReference>
<dbReference type="GO" id="GO:0032735">
    <property type="term" value="P:positive regulation of interleukin-12 production"/>
    <property type="evidence" value="ECO:0000266"/>
    <property type="project" value="RGD"/>
</dbReference>
<dbReference type="GO" id="GO:0032755">
    <property type="term" value="P:positive regulation of interleukin-6 production"/>
    <property type="evidence" value="ECO:0000266"/>
    <property type="project" value="RGD"/>
</dbReference>
<dbReference type="GO" id="GO:0032757">
    <property type="term" value="P:positive regulation of interleukin-8 production"/>
    <property type="evidence" value="ECO:0000266"/>
    <property type="project" value="RGD"/>
</dbReference>
<dbReference type="GO" id="GO:0046330">
    <property type="term" value="P:positive regulation of JNK cascade"/>
    <property type="evidence" value="ECO:0000266"/>
    <property type="project" value="RGD"/>
</dbReference>
<dbReference type="GO" id="GO:0050671">
    <property type="term" value="P:positive regulation of lymphocyte proliferation"/>
    <property type="evidence" value="ECO:0000266"/>
    <property type="project" value="RGD"/>
</dbReference>
<dbReference type="GO" id="GO:0043032">
    <property type="term" value="P:positive regulation of macrophage activation"/>
    <property type="evidence" value="ECO:0000266"/>
    <property type="project" value="RGD"/>
</dbReference>
<dbReference type="GO" id="GO:0060907">
    <property type="term" value="P:positive regulation of macrophage cytokine production"/>
    <property type="evidence" value="ECO:0000266"/>
    <property type="project" value="RGD"/>
</dbReference>
<dbReference type="GO" id="GO:1904466">
    <property type="term" value="P:positive regulation of matrix metallopeptidase secretion"/>
    <property type="evidence" value="ECO:0000266"/>
    <property type="project" value="RGD"/>
</dbReference>
<dbReference type="GO" id="GO:0045348">
    <property type="term" value="P:positive regulation of MHC class II biosynthetic process"/>
    <property type="evidence" value="ECO:0000266"/>
    <property type="project" value="RGD"/>
</dbReference>
<dbReference type="GO" id="GO:0045429">
    <property type="term" value="P:positive regulation of nitric oxide biosynthetic process"/>
    <property type="evidence" value="ECO:0000266"/>
    <property type="project" value="RGD"/>
</dbReference>
<dbReference type="GO" id="GO:1900227">
    <property type="term" value="P:positive regulation of NLRP3 inflammasome complex assembly"/>
    <property type="evidence" value="ECO:0000250"/>
    <property type="project" value="UniProtKB"/>
</dbReference>
<dbReference type="GO" id="GO:1901224">
    <property type="term" value="P:positive regulation of non-canonical NF-kappaB signal transduction"/>
    <property type="evidence" value="ECO:0000266"/>
    <property type="project" value="RGD"/>
</dbReference>
<dbReference type="GO" id="GO:0070430">
    <property type="term" value="P:positive regulation of nucleotide-binding oligomerization domain containing 1 signaling pathway"/>
    <property type="evidence" value="ECO:0000266"/>
    <property type="project" value="RGD"/>
</dbReference>
<dbReference type="GO" id="GO:0070434">
    <property type="term" value="P:positive regulation of nucleotide-binding oligomerization domain containing 2 signaling pathway"/>
    <property type="evidence" value="ECO:0000266"/>
    <property type="project" value="RGD"/>
</dbReference>
<dbReference type="GO" id="GO:0010572">
    <property type="term" value="P:positive regulation of platelet activation"/>
    <property type="evidence" value="ECO:0000266"/>
    <property type="project" value="RGD"/>
</dbReference>
<dbReference type="GO" id="GO:1903428">
    <property type="term" value="P:positive regulation of reactive oxygen species biosynthetic process"/>
    <property type="evidence" value="ECO:0000266"/>
    <property type="project" value="RGD"/>
</dbReference>
<dbReference type="GO" id="GO:0014911">
    <property type="term" value="P:positive regulation of smooth muscle cell migration"/>
    <property type="evidence" value="ECO:0000266"/>
    <property type="project" value="RGD"/>
</dbReference>
<dbReference type="GO" id="GO:0048661">
    <property type="term" value="P:positive regulation of smooth muscle cell proliferation"/>
    <property type="evidence" value="ECO:0000266"/>
    <property type="project" value="RGD"/>
</dbReference>
<dbReference type="GO" id="GO:0032874">
    <property type="term" value="P:positive regulation of stress-activated MAPK cascade"/>
    <property type="evidence" value="ECO:0000266"/>
    <property type="project" value="RGD"/>
</dbReference>
<dbReference type="GO" id="GO:0045944">
    <property type="term" value="P:positive regulation of transcription by RNA polymerase II"/>
    <property type="evidence" value="ECO:0000266"/>
    <property type="project" value="RGD"/>
</dbReference>
<dbReference type="GO" id="GO:0032760">
    <property type="term" value="P:positive regulation of tumor necrosis factor production"/>
    <property type="evidence" value="ECO:0000266"/>
    <property type="project" value="RGD"/>
</dbReference>
<dbReference type="GO" id="GO:0032729">
    <property type="term" value="P:positive regulation of type II interferon production"/>
    <property type="evidence" value="ECO:0000266"/>
    <property type="project" value="RGD"/>
</dbReference>
<dbReference type="GO" id="GO:0002730">
    <property type="term" value="P:regulation of dendritic cell cytokine production"/>
    <property type="evidence" value="ECO:0000266"/>
    <property type="project" value="RGD"/>
</dbReference>
<dbReference type="GO" id="GO:0050727">
    <property type="term" value="P:regulation of inflammatory response"/>
    <property type="evidence" value="ECO:0000266"/>
    <property type="project" value="RGD"/>
</dbReference>
<dbReference type="GO" id="GO:0032680">
    <property type="term" value="P:regulation of tumor necrosis factor production"/>
    <property type="evidence" value="ECO:0000315"/>
    <property type="project" value="RGD"/>
</dbReference>
<dbReference type="GO" id="GO:0014823">
    <property type="term" value="P:response to activity"/>
    <property type="evidence" value="ECO:0000270"/>
    <property type="project" value="RGD"/>
</dbReference>
<dbReference type="GO" id="GO:0009617">
    <property type="term" value="P:response to bacterium"/>
    <property type="evidence" value="ECO:0000266"/>
    <property type="project" value="RGD"/>
</dbReference>
<dbReference type="GO" id="GO:0045471">
    <property type="term" value="P:response to ethanol"/>
    <property type="evidence" value="ECO:0000315"/>
    <property type="project" value="RGD"/>
</dbReference>
<dbReference type="GO" id="GO:0070542">
    <property type="term" value="P:response to fatty acid"/>
    <property type="evidence" value="ECO:0000314"/>
    <property type="project" value="RGD"/>
</dbReference>
<dbReference type="GO" id="GO:0051384">
    <property type="term" value="P:response to glucocorticoid"/>
    <property type="evidence" value="ECO:0000270"/>
    <property type="project" value="RGD"/>
</dbReference>
<dbReference type="GO" id="GO:1990268">
    <property type="term" value="P:response to gold nanoparticle"/>
    <property type="evidence" value="ECO:0000270"/>
    <property type="project" value="RGD"/>
</dbReference>
<dbReference type="GO" id="GO:0001666">
    <property type="term" value="P:response to hypoxia"/>
    <property type="evidence" value="ECO:0000270"/>
    <property type="project" value="RGD"/>
</dbReference>
<dbReference type="GO" id="GO:0032868">
    <property type="term" value="P:response to insulin"/>
    <property type="evidence" value="ECO:0000270"/>
    <property type="project" value="RGD"/>
</dbReference>
<dbReference type="GO" id="GO:0032496">
    <property type="term" value="P:response to lipopolysaccharide"/>
    <property type="evidence" value="ECO:0000314"/>
    <property type="project" value="RGD"/>
</dbReference>
<dbReference type="GO" id="GO:0006979">
    <property type="term" value="P:response to oxidative stress"/>
    <property type="evidence" value="ECO:0000315"/>
    <property type="project" value="RGD"/>
</dbReference>
<dbReference type="GO" id="GO:0032570">
    <property type="term" value="P:response to progesterone"/>
    <property type="evidence" value="ECO:0000270"/>
    <property type="project" value="RGD"/>
</dbReference>
<dbReference type="GO" id="GO:0032526">
    <property type="term" value="P:response to retinoic acid"/>
    <property type="evidence" value="ECO:0000270"/>
    <property type="project" value="RGD"/>
</dbReference>
<dbReference type="GO" id="GO:0009636">
    <property type="term" value="P:response to toxic substance"/>
    <property type="evidence" value="ECO:0000270"/>
    <property type="project" value="RGD"/>
</dbReference>
<dbReference type="GO" id="GO:0003009">
    <property type="term" value="P:skeletal muscle contraction"/>
    <property type="evidence" value="ECO:0000270"/>
    <property type="project" value="RGD"/>
</dbReference>
<dbReference type="GO" id="GO:0051403">
    <property type="term" value="P:stress-activated MAPK cascade"/>
    <property type="evidence" value="ECO:0000266"/>
    <property type="project" value="RGD"/>
</dbReference>
<dbReference type="GO" id="GO:0034142">
    <property type="term" value="P:toll-like receptor 4 signaling pathway"/>
    <property type="evidence" value="ECO:0000266"/>
    <property type="project" value="RGD"/>
</dbReference>
<dbReference type="GO" id="GO:0002224">
    <property type="term" value="P:toll-like receptor signaling pathway"/>
    <property type="evidence" value="ECO:0000314"/>
    <property type="project" value="RGD"/>
</dbReference>
<dbReference type="GO" id="GO:0035666">
    <property type="term" value="P:TRIF-dependent toll-like receptor signaling pathway"/>
    <property type="evidence" value="ECO:0000266"/>
    <property type="project" value="RGD"/>
</dbReference>
<dbReference type="GO" id="GO:0002246">
    <property type="term" value="P:wound healing involved in inflammatory response"/>
    <property type="evidence" value="ECO:0000266"/>
    <property type="project" value="RGD"/>
</dbReference>
<dbReference type="FunFam" id="3.40.50.10140:FF:000006">
    <property type="entry name" value="Toll-like receptor 4"/>
    <property type="match status" value="1"/>
</dbReference>
<dbReference type="FunFam" id="3.80.10.10:FF:000195">
    <property type="entry name" value="Toll-like receptor 4"/>
    <property type="match status" value="1"/>
</dbReference>
<dbReference type="Gene3D" id="3.80.10.10">
    <property type="entry name" value="Ribonuclease Inhibitor"/>
    <property type="match status" value="1"/>
</dbReference>
<dbReference type="Gene3D" id="3.40.50.10140">
    <property type="entry name" value="Toll/interleukin-1 receptor homology (TIR) domain"/>
    <property type="match status" value="1"/>
</dbReference>
<dbReference type="InterPro" id="IPR001611">
    <property type="entry name" value="Leu-rich_rpt"/>
</dbReference>
<dbReference type="InterPro" id="IPR003591">
    <property type="entry name" value="Leu-rich_rpt_typical-subtyp"/>
</dbReference>
<dbReference type="InterPro" id="IPR032675">
    <property type="entry name" value="LRR_dom_sf"/>
</dbReference>
<dbReference type="InterPro" id="IPR000157">
    <property type="entry name" value="TIR_dom"/>
</dbReference>
<dbReference type="InterPro" id="IPR017241">
    <property type="entry name" value="Toll-like_receptor"/>
</dbReference>
<dbReference type="InterPro" id="IPR035897">
    <property type="entry name" value="Toll_tir_struct_dom_sf"/>
</dbReference>
<dbReference type="PANTHER" id="PTHR24365">
    <property type="entry name" value="TOLL-LIKE RECEPTOR"/>
    <property type="match status" value="1"/>
</dbReference>
<dbReference type="PANTHER" id="PTHR24365:SF521">
    <property type="entry name" value="TOLL-LIKE RECEPTOR 4"/>
    <property type="match status" value="1"/>
</dbReference>
<dbReference type="Pfam" id="PF13855">
    <property type="entry name" value="LRR_8"/>
    <property type="match status" value="3"/>
</dbReference>
<dbReference type="Pfam" id="PF01582">
    <property type="entry name" value="TIR"/>
    <property type="match status" value="1"/>
</dbReference>
<dbReference type="PIRSF" id="PIRSF037595">
    <property type="entry name" value="Toll-like_receptor"/>
    <property type="match status" value="1"/>
</dbReference>
<dbReference type="SMART" id="SM00369">
    <property type="entry name" value="LRR_TYP"/>
    <property type="match status" value="9"/>
</dbReference>
<dbReference type="SMART" id="SM00255">
    <property type="entry name" value="TIR"/>
    <property type="match status" value="1"/>
</dbReference>
<dbReference type="SUPFAM" id="SSF52058">
    <property type="entry name" value="L domain-like"/>
    <property type="match status" value="3"/>
</dbReference>
<dbReference type="SUPFAM" id="SSF52200">
    <property type="entry name" value="Toll/Interleukin receptor TIR domain"/>
    <property type="match status" value="1"/>
</dbReference>
<dbReference type="PROSITE" id="PS51450">
    <property type="entry name" value="LRR"/>
    <property type="match status" value="13"/>
</dbReference>
<dbReference type="PROSITE" id="PS50104">
    <property type="entry name" value="TIR"/>
    <property type="match status" value="1"/>
</dbReference>
<feature type="signal peptide" evidence="3">
    <location>
        <begin position="1"/>
        <end position="25"/>
    </location>
</feature>
<feature type="chain" id="PRO_0000034728" description="Toll-like receptor 4">
    <location>
        <begin position="26"/>
        <end position="835"/>
    </location>
</feature>
<feature type="topological domain" description="Extracellular" evidence="3">
    <location>
        <begin position="26"/>
        <end position="638"/>
    </location>
</feature>
<feature type="transmembrane region" description="Helical" evidence="3">
    <location>
        <begin position="639"/>
        <end position="659"/>
    </location>
</feature>
<feature type="topological domain" description="Cytoplasmic" evidence="3">
    <location>
        <begin position="660"/>
        <end position="835"/>
    </location>
</feature>
<feature type="repeat" description="LRR 1">
    <location>
        <begin position="54"/>
        <end position="75"/>
    </location>
</feature>
<feature type="repeat" description="LRR 2">
    <location>
        <begin position="78"/>
        <end position="99"/>
    </location>
</feature>
<feature type="repeat" description="LRR 3">
    <location>
        <begin position="102"/>
        <end position="123"/>
    </location>
</feature>
<feature type="repeat" description="LRR 4">
    <location>
        <begin position="126"/>
        <end position="147"/>
    </location>
</feature>
<feature type="repeat" description="LRR 5">
    <location>
        <begin position="150"/>
        <end position="171"/>
    </location>
</feature>
<feature type="repeat" description="LRR 6">
    <location>
        <begin position="175"/>
        <end position="198"/>
    </location>
</feature>
<feature type="repeat" description="LRR 7">
    <location>
        <begin position="204"/>
        <end position="224"/>
    </location>
</feature>
<feature type="repeat" description="LRR 8">
    <location>
        <begin position="226"/>
        <end position="247"/>
    </location>
</feature>
<feature type="repeat" description="LRR 9">
    <location>
        <begin position="372"/>
        <end position="381"/>
    </location>
</feature>
<feature type="repeat" description="LRR 10">
    <location>
        <begin position="398"/>
        <end position="420"/>
    </location>
</feature>
<feature type="repeat" description="LRR 11">
    <location>
        <begin position="421"/>
        <end position="442"/>
    </location>
</feature>
<feature type="repeat" description="LRR 12">
    <location>
        <begin position="446"/>
        <end position="467"/>
    </location>
</feature>
<feature type="repeat" description="LRR 13">
    <location>
        <begin position="470"/>
        <end position="491"/>
    </location>
</feature>
<feature type="repeat" description="LRR 14">
    <location>
        <begin position="495"/>
        <end position="516"/>
    </location>
</feature>
<feature type="repeat" description="LRR 15">
    <location>
        <begin position="519"/>
        <end position="540"/>
    </location>
</feature>
<feature type="repeat" description="LRR 16">
    <location>
        <begin position="543"/>
        <end position="564"/>
    </location>
</feature>
<feature type="domain" description="LRRCT">
    <location>
        <begin position="576"/>
        <end position="627"/>
    </location>
</feature>
<feature type="domain" description="TIR" evidence="4">
    <location>
        <begin position="670"/>
        <end position="813"/>
    </location>
</feature>
<feature type="glycosylation site" description="N-linked (GlcNAc...) asparagine" evidence="3">
    <location>
        <position position="34"/>
    </location>
</feature>
<feature type="glycosylation site" description="N-linked (GlcNAc...) asparagine" evidence="3">
    <location>
        <position position="43"/>
    </location>
</feature>
<feature type="glycosylation site" description="N-linked (GlcNAc...) asparagine" evidence="3">
    <location>
        <position position="75"/>
    </location>
</feature>
<feature type="glycosylation site" description="N-linked (GlcNAc...) asparagine" evidence="3">
    <location>
        <position position="172"/>
    </location>
</feature>
<feature type="glycosylation site" description="N-linked (GlcNAc...) asparagine" evidence="3">
    <location>
        <position position="204"/>
    </location>
</feature>
<feature type="glycosylation site" description="N-linked (GlcNAc...) asparagine" evidence="3">
    <location>
        <position position="237"/>
    </location>
</feature>
<feature type="glycosylation site" description="N-linked (GlcNAc...) asparagine" evidence="3">
    <location>
        <position position="248"/>
    </location>
</feature>
<feature type="glycosylation site" description="N-linked (GlcNAc...) asparagine" evidence="3">
    <location>
        <position position="281"/>
    </location>
</feature>
<feature type="glycosylation site" description="N-linked (GlcNAc...) asparagine" evidence="3">
    <location>
        <position position="307"/>
    </location>
</feature>
<feature type="glycosylation site" description="N-linked (GlcNAc...) asparagine" evidence="3">
    <location>
        <position position="492"/>
    </location>
</feature>
<feature type="glycosylation site" description="N-linked (GlcNAc...) asparagine" evidence="3">
    <location>
        <position position="495"/>
    </location>
</feature>
<feature type="glycosylation site" description="N-linked (GlcNAc...) asparagine" evidence="3">
    <location>
        <position position="524"/>
    </location>
</feature>
<feature type="glycosylation site" description="N-linked (GlcNAc...) asparagine" evidence="3">
    <location>
        <position position="572"/>
    </location>
</feature>
<feature type="glycosylation site" description="N-linked (GlcNAc...) asparagine" evidence="3">
    <location>
        <position position="575"/>
    </location>
</feature>
<feature type="glycosylation site" description="N-linked (GlcNAc...) asparagine" evidence="3">
    <location>
        <position position="622"/>
    </location>
</feature>
<feature type="disulfide bond" evidence="1">
    <location>
        <begin position="28"/>
        <end position="39"/>
    </location>
</feature>
<feature type="disulfide bond" evidence="1">
    <location>
        <begin position="280"/>
        <end position="304"/>
    </location>
</feature>
<feature type="disulfide bond" evidence="1">
    <location>
        <begin position="388"/>
        <end position="389"/>
    </location>
</feature>
<feature type="disulfide bond" evidence="1">
    <location>
        <begin position="580"/>
        <end position="606"/>
    </location>
</feature>
<feature type="disulfide bond" evidence="1">
    <location>
        <begin position="582"/>
        <end position="625"/>
    </location>
</feature>
<name>TLR4_RAT</name>